<proteinExistence type="inferred from homology"/>
<name>PIMT_SALHS</name>
<protein>
    <recommendedName>
        <fullName evidence="1">Protein-L-isoaspartate O-methyltransferase</fullName>
        <ecNumber evidence="1">2.1.1.77</ecNumber>
    </recommendedName>
    <alternativeName>
        <fullName evidence="1">L-isoaspartyl protein carboxyl methyltransferase</fullName>
    </alternativeName>
    <alternativeName>
        <fullName evidence="1">Protein L-isoaspartyl methyltransferase</fullName>
    </alternativeName>
    <alternativeName>
        <fullName evidence="1">Protein-beta-aspartate methyltransferase</fullName>
        <shortName evidence="1">PIMT</shortName>
    </alternativeName>
</protein>
<evidence type="ECO:0000255" key="1">
    <source>
        <dbReference type="HAMAP-Rule" id="MF_00090"/>
    </source>
</evidence>
<feature type="chain" id="PRO_1000093275" description="Protein-L-isoaspartate O-methyltransferase">
    <location>
        <begin position="1"/>
        <end position="208"/>
    </location>
</feature>
<feature type="active site" evidence="1">
    <location>
        <position position="59"/>
    </location>
</feature>
<gene>
    <name evidence="1" type="primary">pcm</name>
    <name type="ordered locus">SeHA_C3116</name>
</gene>
<reference key="1">
    <citation type="journal article" date="2011" name="J. Bacteriol.">
        <title>Comparative genomics of 28 Salmonella enterica isolates: evidence for CRISPR-mediated adaptive sublineage evolution.</title>
        <authorList>
            <person name="Fricke W.F."/>
            <person name="Mammel M.K."/>
            <person name="McDermott P.F."/>
            <person name="Tartera C."/>
            <person name="White D.G."/>
            <person name="Leclerc J.E."/>
            <person name="Ravel J."/>
            <person name="Cebula T.A."/>
        </authorList>
    </citation>
    <scope>NUCLEOTIDE SEQUENCE [LARGE SCALE GENOMIC DNA]</scope>
    <source>
        <strain>SL476</strain>
    </source>
</reference>
<dbReference type="EC" id="2.1.1.77" evidence="1"/>
<dbReference type="EMBL" id="CP001120">
    <property type="protein sequence ID" value="ACF69295.1"/>
    <property type="molecule type" value="Genomic_DNA"/>
</dbReference>
<dbReference type="RefSeq" id="WP_000253545.1">
    <property type="nucleotide sequence ID" value="NC_011083.1"/>
</dbReference>
<dbReference type="SMR" id="B4TFW3"/>
<dbReference type="KEGG" id="seh:SeHA_C3116"/>
<dbReference type="HOGENOM" id="CLU_055432_2_0_6"/>
<dbReference type="Proteomes" id="UP000001866">
    <property type="component" value="Chromosome"/>
</dbReference>
<dbReference type="GO" id="GO:0005737">
    <property type="term" value="C:cytoplasm"/>
    <property type="evidence" value="ECO:0007669"/>
    <property type="project" value="UniProtKB-SubCell"/>
</dbReference>
<dbReference type="GO" id="GO:0004719">
    <property type="term" value="F:protein-L-isoaspartate (D-aspartate) O-methyltransferase activity"/>
    <property type="evidence" value="ECO:0007669"/>
    <property type="project" value="UniProtKB-UniRule"/>
</dbReference>
<dbReference type="GO" id="GO:0032259">
    <property type="term" value="P:methylation"/>
    <property type="evidence" value="ECO:0007669"/>
    <property type="project" value="UniProtKB-KW"/>
</dbReference>
<dbReference type="GO" id="GO:0036211">
    <property type="term" value="P:protein modification process"/>
    <property type="evidence" value="ECO:0007669"/>
    <property type="project" value="UniProtKB-UniRule"/>
</dbReference>
<dbReference type="GO" id="GO:0030091">
    <property type="term" value="P:protein repair"/>
    <property type="evidence" value="ECO:0007669"/>
    <property type="project" value="UniProtKB-UniRule"/>
</dbReference>
<dbReference type="CDD" id="cd02440">
    <property type="entry name" value="AdoMet_MTases"/>
    <property type="match status" value="1"/>
</dbReference>
<dbReference type="FunFam" id="3.40.50.150:FF:000010">
    <property type="entry name" value="Protein-L-isoaspartate O-methyltransferase"/>
    <property type="match status" value="1"/>
</dbReference>
<dbReference type="Gene3D" id="3.40.50.150">
    <property type="entry name" value="Vaccinia Virus protein VP39"/>
    <property type="match status" value="1"/>
</dbReference>
<dbReference type="HAMAP" id="MF_00090">
    <property type="entry name" value="PIMT"/>
    <property type="match status" value="1"/>
</dbReference>
<dbReference type="InterPro" id="IPR000682">
    <property type="entry name" value="PCMT"/>
</dbReference>
<dbReference type="InterPro" id="IPR029063">
    <property type="entry name" value="SAM-dependent_MTases_sf"/>
</dbReference>
<dbReference type="NCBIfam" id="TIGR00080">
    <property type="entry name" value="pimt"/>
    <property type="match status" value="1"/>
</dbReference>
<dbReference type="NCBIfam" id="NF001453">
    <property type="entry name" value="PRK00312.1"/>
    <property type="match status" value="1"/>
</dbReference>
<dbReference type="PANTHER" id="PTHR11579">
    <property type="entry name" value="PROTEIN-L-ISOASPARTATE O-METHYLTRANSFERASE"/>
    <property type="match status" value="1"/>
</dbReference>
<dbReference type="PANTHER" id="PTHR11579:SF0">
    <property type="entry name" value="PROTEIN-L-ISOASPARTATE(D-ASPARTATE) O-METHYLTRANSFERASE"/>
    <property type="match status" value="1"/>
</dbReference>
<dbReference type="Pfam" id="PF01135">
    <property type="entry name" value="PCMT"/>
    <property type="match status" value="1"/>
</dbReference>
<dbReference type="SUPFAM" id="SSF53335">
    <property type="entry name" value="S-adenosyl-L-methionine-dependent methyltransferases"/>
    <property type="match status" value="1"/>
</dbReference>
<dbReference type="PROSITE" id="PS01279">
    <property type="entry name" value="PCMT"/>
    <property type="match status" value="1"/>
</dbReference>
<keyword id="KW-0963">Cytoplasm</keyword>
<keyword id="KW-0489">Methyltransferase</keyword>
<keyword id="KW-0949">S-adenosyl-L-methionine</keyword>
<keyword id="KW-0808">Transferase</keyword>
<comment type="function">
    <text evidence="1">Catalyzes the methyl esterification of L-isoaspartyl residues in peptides and proteins that result from spontaneous decomposition of normal L-aspartyl and L-asparaginyl residues. It plays a role in the repair and/or degradation of damaged proteins.</text>
</comment>
<comment type="catalytic activity">
    <reaction evidence="1">
        <text>[protein]-L-isoaspartate + S-adenosyl-L-methionine = [protein]-L-isoaspartate alpha-methyl ester + S-adenosyl-L-homocysteine</text>
        <dbReference type="Rhea" id="RHEA:12705"/>
        <dbReference type="Rhea" id="RHEA-COMP:12143"/>
        <dbReference type="Rhea" id="RHEA-COMP:12144"/>
        <dbReference type="ChEBI" id="CHEBI:57856"/>
        <dbReference type="ChEBI" id="CHEBI:59789"/>
        <dbReference type="ChEBI" id="CHEBI:90596"/>
        <dbReference type="ChEBI" id="CHEBI:90598"/>
        <dbReference type="EC" id="2.1.1.77"/>
    </reaction>
</comment>
<comment type="subcellular location">
    <subcellularLocation>
        <location evidence="1">Cytoplasm</location>
    </subcellularLocation>
</comment>
<comment type="similarity">
    <text evidence="1">Belongs to the methyltransferase superfamily. L-isoaspartyl/D-aspartyl protein methyltransferase family.</text>
</comment>
<sequence length="208" mass="23192">MVSGRVQALLEQLRAQGIRDEQVLNALAAVPREKFIDEAFEHKAWENIALPIGQGQTISQPYMVARMTELLELTPQSRVLEIGTGSGYQTAILAHLVHHVCSVERIKGLQWQARRRLKQLDLHNVSTRHGDGWQGWQARAPFDAIIVTAAPPEIPTALMAQLDEGGILVLPVGDEQQFLKRVRRRGGEFIIDTVEAVRFVPLVKGELA</sequence>
<organism>
    <name type="scientific">Salmonella heidelberg (strain SL476)</name>
    <dbReference type="NCBI Taxonomy" id="454169"/>
    <lineage>
        <taxon>Bacteria</taxon>
        <taxon>Pseudomonadati</taxon>
        <taxon>Pseudomonadota</taxon>
        <taxon>Gammaproteobacteria</taxon>
        <taxon>Enterobacterales</taxon>
        <taxon>Enterobacteriaceae</taxon>
        <taxon>Salmonella</taxon>
    </lineage>
</organism>
<accession>B4TFW3</accession>